<keyword id="KW-0235">DNA replication</keyword>
<keyword id="KW-0614">Plasmid</keyword>
<keyword id="KW-0615">Plasmid copy control</keyword>
<name>REA1_ECOLI</name>
<reference key="1">
    <citation type="journal article" date="1987" name="J. Bacteriol.">
        <title>Nucleotide sequence analysis of RepFIC, a basic replicon present in IncFI plasmids P307 and F, and its relation to the RepA replicon of IncFII plasmids.</title>
        <authorList>
            <person name="Saadi S."/>
            <person name="Maas W.K."/>
            <person name="Hill D.F."/>
            <person name="Bergquist P.L."/>
        </authorList>
    </citation>
    <scope>NUCLEOTIDE SEQUENCE [GENOMIC DNA]</scope>
</reference>
<reference key="2">
    <citation type="submission" date="2000-04" db="EMBL/GenBank/DDBJ databases">
        <title>Complete nucleotide sequence of the F plasmid: its implications for organization and diversification of plasmid genomes.</title>
        <authorList>
            <person name="Shimizu H."/>
            <person name="Saitoh Y."/>
            <person name="Suda Y."/>
            <person name="Uehara K."/>
            <person name="Sampei G."/>
            <person name="Mizobuchi K."/>
        </authorList>
    </citation>
    <scope>NUCLEOTIDE SEQUENCE [LARGE SCALE GENOMIC DNA]</scope>
    <source>
        <strain>K12 / CR63</strain>
    </source>
</reference>
<dbReference type="EMBL" id="AH003523">
    <property type="protein sequence ID" value="AAA99008.1"/>
    <property type="molecule type" value="Genomic_DNA"/>
</dbReference>
<dbReference type="EMBL" id="AP001918">
    <property type="status" value="NOT_ANNOTATED_CDS"/>
    <property type="molecule type" value="Genomic_DNA"/>
</dbReference>
<dbReference type="PIR" id="D26870">
    <property type="entry name" value="D26870"/>
</dbReference>
<dbReference type="SMR" id="P13960"/>
<dbReference type="GO" id="GO:0006260">
    <property type="term" value="P:DNA replication"/>
    <property type="evidence" value="ECO:0007669"/>
    <property type="project" value="UniProtKB-KW"/>
</dbReference>
<dbReference type="GO" id="GO:0006276">
    <property type="term" value="P:plasmid maintenance"/>
    <property type="evidence" value="ECO:0007669"/>
    <property type="project" value="UniProtKB-KW"/>
</dbReference>
<sequence>MANHETHSVIAGGIESDLHIDSSKYPHPFCSLLQKRAHFDSFKHLIFIRGLLVIAHGKRKNKISASMVSFYVSLVQVMCAHYIPDTNKVNL</sequence>
<proteinExistence type="uncertain"/>
<accession>P13960</accession>
<geneLocation type="plasmid">
    <name>F</name>
</geneLocation>
<comment type="caution">
    <text evidence="1">Could be the product of a pseudogene. The protein is truncated by the insertion of transposon Tn1000.</text>
</comment>
<gene>
    <name type="primary">repA1</name>
</gene>
<protein>
    <recommendedName>
        <fullName>Putative defective replication initiation protein</fullName>
    </recommendedName>
    <alternativeName>
        <fullName>RepFIC replication initiation protein</fullName>
    </alternativeName>
</protein>
<organism>
    <name type="scientific">Escherichia coli (strain K12)</name>
    <dbReference type="NCBI Taxonomy" id="83333"/>
    <lineage>
        <taxon>Bacteria</taxon>
        <taxon>Pseudomonadati</taxon>
        <taxon>Pseudomonadota</taxon>
        <taxon>Gammaproteobacteria</taxon>
        <taxon>Enterobacterales</taxon>
        <taxon>Enterobacteriaceae</taxon>
        <taxon>Escherichia</taxon>
    </lineage>
</organism>
<evidence type="ECO:0000305" key="1"/>
<feature type="chain" id="PRO_0000068296" description="Putative defective replication initiation protein">
    <location>
        <begin position="1"/>
        <end position="91" status="greater than"/>
    </location>
</feature>
<feature type="non-terminal residue">
    <location>
        <position position="91"/>
    </location>
</feature>